<name>PHAA_THEVB</name>
<accession>P50030</accession>
<reference key="1">
    <citation type="submission" date="1993-06" db="EMBL/GenBank/DDBJ databases">
        <title>Cloning and sequencing of the allophycocyanin operon from the thermophilic cyanobacterium Synechococcus elongatus.</title>
        <authorList>
            <person name="Shimazu T."/>
            <person name="Soga M."/>
            <person name="Hirano M."/>
            <person name="Katoh S."/>
        </authorList>
    </citation>
    <scope>NUCLEOTIDE SEQUENCE [GENOMIC DNA]</scope>
</reference>
<reference key="2">
    <citation type="journal article" date="2002" name="DNA Res.">
        <title>Complete genome structure of the thermophilic cyanobacterium Thermosynechococcus elongatus BP-1.</title>
        <authorList>
            <person name="Nakamura Y."/>
            <person name="Kaneko T."/>
            <person name="Sato S."/>
            <person name="Ikeuchi M."/>
            <person name="Katoh H."/>
            <person name="Sasamoto S."/>
            <person name="Watanabe A."/>
            <person name="Iriguchi M."/>
            <person name="Kawashima K."/>
            <person name="Kimura T."/>
            <person name="Kishida Y."/>
            <person name="Kiyokawa C."/>
            <person name="Kohara M."/>
            <person name="Matsumoto M."/>
            <person name="Matsuno A."/>
            <person name="Nakazaki N."/>
            <person name="Shimpo S."/>
            <person name="Sugimoto M."/>
            <person name="Takeuchi C."/>
            <person name="Yamada M."/>
            <person name="Tabata S."/>
        </authorList>
    </citation>
    <scope>NUCLEOTIDE SEQUENCE [LARGE SCALE GENOMIC DNA]</scope>
    <source>
        <strain>NIES-2133 / IAM M-273 / BP-1</strain>
    </source>
</reference>
<feature type="initiator methionine" description="Removed" evidence="1">
    <location>
        <position position="1"/>
    </location>
</feature>
<feature type="chain" id="PRO_0000199075" description="Allophycocyanin alpha chain">
    <location>
        <begin position="2"/>
        <end position="161"/>
    </location>
</feature>
<feature type="binding site" description="covalent" evidence="1">
    <location>
        <position position="81"/>
    </location>
    <ligand>
        <name>(2R,3E)-phycocyanobilin</name>
        <dbReference type="ChEBI" id="CHEBI:85275"/>
    </ligand>
</feature>
<feature type="modified residue" description="N4-methylasparagine" evidence="1">
    <location>
        <position position="71"/>
    </location>
</feature>
<feature type="helix" evidence="3">
    <location>
        <begin position="3"/>
        <end position="13"/>
    </location>
</feature>
<feature type="helix" evidence="3">
    <location>
        <begin position="20"/>
        <end position="31"/>
    </location>
</feature>
<feature type="helix" evidence="3">
    <location>
        <begin position="33"/>
        <end position="45"/>
    </location>
</feature>
<feature type="helix" evidence="3">
    <location>
        <begin position="47"/>
        <end position="61"/>
    </location>
</feature>
<feature type="helix" evidence="3">
    <location>
        <begin position="63"/>
        <end position="65"/>
    </location>
</feature>
<feature type="helix" evidence="3">
    <location>
        <begin position="75"/>
        <end position="98"/>
    </location>
</feature>
<feature type="helix" evidence="3">
    <location>
        <begin position="102"/>
        <end position="108"/>
    </location>
</feature>
<feature type="turn" evidence="3">
    <location>
        <begin position="109"/>
        <end position="111"/>
    </location>
</feature>
<feature type="helix" evidence="3">
    <location>
        <begin position="112"/>
        <end position="119"/>
    </location>
</feature>
<feature type="helix" evidence="3">
    <location>
        <begin position="123"/>
        <end position="140"/>
    </location>
</feature>
<feature type="helix" evidence="3">
    <location>
        <begin position="143"/>
        <end position="160"/>
    </location>
</feature>
<sequence length="161" mass="17539">MSVVTKSIVNADAEARYLSPGELDRIKNFVSTGERRLRIAQTLTENRERIVKQAGDQLFQKRPDVVSPGGNAYGEEMTATCLRDLDYYLRLVTYGIVAGDVTPIEEIGLVGVREMYNSLGTPIPAVAEGIRAMKNVACSLLSAEDAAEAGSYFDFVIGAMQ</sequence>
<protein>
    <recommendedName>
        <fullName>Allophycocyanin alpha chain</fullName>
    </recommendedName>
</protein>
<keyword id="KW-0002">3D-structure</keyword>
<keyword id="KW-0042">Antenna complex</keyword>
<keyword id="KW-0089">Bile pigment</keyword>
<keyword id="KW-0157">Chromophore</keyword>
<keyword id="KW-0249">Electron transport</keyword>
<keyword id="KW-0472">Membrane</keyword>
<keyword id="KW-0488">Methylation</keyword>
<keyword id="KW-0602">Photosynthesis</keyword>
<keyword id="KW-0605">Phycobilisome</keyword>
<keyword id="KW-1185">Reference proteome</keyword>
<keyword id="KW-0793">Thylakoid</keyword>
<keyword id="KW-0813">Transport</keyword>
<dbReference type="EMBL" id="D16540">
    <property type="protein sequence ID" value="BAA03976.1"/>
    <property type="molecule type" value="Genomic_DNA"/>
</dbReference>
<dbReference type="EMBL" id="BA000039">
    <property type="protein sequence ID" value="BAC08509.1"/>
    <property type="molecule type" value="Genomic_DNA"/>
</dbReference>
<dbReference type="RefSeq" id="NP_681747.1">
    <property type="nucleotide sequence ID" value="NC_004113.1"/>
</dbReference>
<dbReference type="RefSeq" id="WP_011056801.1">
    <property type="nucleotide sequence ID" value="NC_004113.1"/>
</dbReference>
<dbReference type="PDB" id="2V8A">
    <property type="method" value="X-ray"/>
    <property type="resolution" value="3.50 A"/>
    <property type="chains" value="A=1-161"/>
</dbReference>
<dbReference type="PDB" id="3DBJ">
    <property type="method" value="X-ray"/>
    <property type="resolution" value="2.90 A"/>
    <property type="chains" value="A/C/E/G=1-161"/>
</dbReference>
<dbReference type="PDB" id="7VEA">
    <property type="method" value="EM"/>
    <property type="resolution" value="3.70 A"/>
    <property type="chains" value="aA/aC/aE/aG/aI/aK/aO/aQ/bM/bO/bQ/bS/bU/bW/cA/cC/cE/cG/cI/cK/dA/dC/dE/dG/dI/dK/dO/dQ/eM/eO=1-161"/>
</dbReference>
<dbReference type="PDBsum" id="2V8A"/>
<dbReference type="PDBsum" id="3DBJ"/>
<dbReference type="PDBsum" id="7VEA"/>
<dbReference type="EMDB" id="EMD-31944"/>
<dbReference type="SMR" id="P50030"/>
<dbReference type="STRING" id="197221.gene:10747549"/>
<dbReference type="EnsemblBacteria" id="BAC08509">
    <property type="protein sequence ID" value="BAC08509"/>
    <property type="gene ID" value="BAC08509"/>
</dbReference>
<dbReference type="KEGG" id="tel:tll0957"/>
<dbReference type="PATRIC" id="fig|197221.4.peg.1004"/>
<dbReference type="eggNOG" id="ENOG502Z7RG">
    <property type="taxonomic scope" value="Bacteria"/>
</dbReference>
<dbReference type="EvolutionaryTrace" id="P50030"/>
<dbReference type="Proteomes" id="UP000000440">
    <property type="component" value="Chromosome"/>
</dbReference>
<dbReference type="GO" id="GO:0030089">
    <property type="term" value="C:phycobilisome"/>
    <property type="evidence" value="ECO:0007669"/>
    <property type="project" value="UniProtKB-KW"/>
</dbReference>
<dbReference type="GO" id="GO:0031676">
    <property type="term" value="C:plasma membrane-derived thylakoid membrane"/>
    <property type="evidence" value="ECO:0007669"/>
    <property type="project" value="UniProtKB-SubCell"/>
</dbReference>
<dbReference type="GO" id="GO:0015979">
    <property type="term" value="P:photosynthesis"/>
    <property type="evidence" value="ECO:0007669"/>
    <property type="project" value="UniProtKB-KW"/>
</dbReference>
<dbReference type="CDD" id="cd12125">
    <property type="entry name" value="APC_alpha"/>
    <property type="match status" value="1"/>
</dbReference>
<dbReference type="Gene3D" id="1.10.490.20">
    <property type="entry name" value="Phycocyanins"/>
    <property type="match status" value="1"/>
</dbReference>
<dbReference type="InterPro" id="IPR009050">
    <property type="entry name" value="Globin-like_sf"/>
</dbReference>
<dbReference type="InterPro" id="IPR012128">
    <property type="entry name" value="Phycobilisome_asu/bsu"/>
</dbReference>
<dbReference type="InterPro" id="IPR038719">
    <property type="entry name" value="Phycobilisome_asu/bsu_sf"/>
</dbReference>
<dbReference type="PANTHER" id="PTHR34011:SF2">
    <property type="entry name" value="ALLOPHYCOCYANIN ALPHA CHAIN"/>
    <property type="match status" value="1"/>
</dbReference>
<dbReference type="PANTHER" id="PTHR34011">
    <property type="entry name" value="PHYCOBILISOME 32.1 KDA LINKER POLYPEPTIDE, PHYCOCYANIN-ASSOCIATED, ROD 2-RELATED"/>
    <property type="match status" value="1"/>
</dbReference>
<dbReference type="Pfam" id="PF00502">
    <property type="entry name" value="Phycobilisome"/>
    <property type="match status" value="1"/>
</dbReference>
<dbReference type="PIRSF" id="PIRSF000081">
    <property type="entry name" value="Phycocyanin"/>
    <property type="match status" value="1"/>
</dbReference>
<dbReference type="SUPFAM" id="SSF46458">
    <property type="entry name" value="Globin-like"/>
    <property type="match status" value="1"/>
</dbReference>
<gene>
    <name type="primary">apcA</name>
    <name type="ordered locus">tll0957</name>
</gene>
<evidence type="ECO:0000250" key="1"/>
<evidence type="ECO:0000305" key="2"/>
<evidence type="ECO:0007829" key="3">
    <source>
        <dbReference type="PDB" id="2V8A"/>
    </source>
</evidence>
<organism>
    <name type="scientific">Thermosynechococcus vestitus (strain NIES-2133 / IAM M-273 / BP-1)</name>
    <dbReference type="NCBI Taxonomy" id="197221"/>
    <lineage>
        <taxon>Bacteria</taxon>
        <taxon>Bacillati</taxon>
        <taxon>Cyanobacteriota</taxon>
        <taxon>Cyanophyceae</taxon>
        <taxon>Acaryochloridales</taxon>
        <taxon>Thermosynechococcaceae</taxon>
        <taxon>Thermosynechococcus</taxon>
    </lineage>
</organism>
<proteinExistence type="evidence at protein level"/>
<comment type="function">
    <text>Light-harvesting photosynthetic bile pigment-protein from the phycobiliprotein complex. Allophycocyanin has a maximum absorption at approximately 650 nanometers.</text>
</comment>
<comment type="subunit">
    <text evidence="1">Heterodimer of an alpha and a beta chain.</text>
</comment>
<comment type="subcellular location">
    <subcellularLocation>
        <location evidence="1">Cellular thylakoid membrane</location>
        <topology evidence="1">Peripheral membrane protein</topology>
        <orientation evidence="1">Cytoplasmic side</orientation>
    </subcellularLocation>
    <text evidence="1">Forms the core of the phycobilisome.</text>
</comment>
<comment type="PTM">
    <text evidence="1">Contains one covalently linked phycocyanobilin chromophore.</text>
</comment>
<comment type="similarity">
    <text evidence="2">Belongs to the phycobiliprotein family.</text>
</comment>